<organism>
    <name type="scientific">Mycobacterium tuberculosis (strain CDC 1551 / Oshkosh)</name>
    <dbReference type="NCBI Taxonomy" id="83331"/>
    <lineage>
        <taxon>Bacteria</taxon>
        <taxon>Bacillati</taxon>
        <taxon>Actinomycetota</taxon>
        <taxon>Actinomycetes</taxon>
        <taxon>Mycobacteriales</taxon>
        <taxon>Mycobacteriaceae</taxon>
        <taxon>Mycobacterium</taxon>
        <taxon>Mycobacterium tuberculosis complex</taxon>
    </lineage>
</organism>
<comment type="catalytic activity">
    <reaction>
        <text>a primary alcohol + NAD(+) = an aldehyde + NADH + H(+)</text>
        <dbReference type="Rhea" id="RHEA:10736"/>
        <dbReference type="ChEBI" id="CHEBI:15378"/>
        <dbReference type="ChEBI" id="CHEBI:15734"/>
        <dbReference type="ChEBI" id="CHEBI:17478"/>
        <dbReference type="ChEBI" id="CHEBI:57540"/>
        <dbReference type="ChEBI" id="CHEBI:57945"/>
        <dbReference type="EC" id="1.1.1.1"/>
    </reaction>
</comment>
<comment type="catalytic activity">
    <reaction>
        <text>a secondary alcohol + NAD(+) = a ketone + NADH + H(+)</text>
        <dbReference type="Rhea" id="RHEA:10740"/>
        <dbReference type="ChEBI" id="CHEBI:15378"/>
        <dbReference type="ChEBI" id="CHEBI:17087"/>
        <dbReference type="ChEBI" id="CHEBI:35681"/>
        <dbReference type="ChEBI" id="CHEBI:57540"/>
        <dbReference type="ChEBI" id="CHEBI:57945"/>
        <dbReference type="EC" id="1.1.1.1"/>
    </reaction>
</comment>
<comment type="cofactor">
    <cofactor evidence="1">
        <name>Zn(2+)</name>
        <dbReference type="ChEBI" id="CHEBI:29105"/>
    </cofactor>
    <text evidence="1">Binds 2 Zn(2+) ions per subunit.</text>
</comment>
<comment type="subcellular location">
    <subcellularLocation>
        <location evidence="1">Cytoplasm</location>
    </subcellularLocation>
</comment>
<comment type="similarity">
    <text evidence="2">Belongs to the zinc-containing alcohol dehydrogenase family.</text>
</comment>
<comment type="sequence caution" evidence="2">
    <conflict type="erroneous initiation">
        <sequence resource="EMBL-CDS" id="AAK45027"/>
    </conflict>
</comment>
<proteinExistence type="inferred from homology"/>
<reference key="1">
    <citation type="journal article" date="2002" name="J. Bacteriol.">
        <title>Whole-genome comparison of Mycobacterium tuberculosis clinical and laboratory strains.</title>
        <authorList>
            <person name="Fleischmann R.D."/>
            <person name="Alland D."/>
            <person name="Eisen J.A."/>
            <person name="Carpenter L."/>
            <person name="White O."/>
            <person name="Peterson J.D."/>
            <person name="DeBoy R.T."/>
            <person name="Dodson R.J."/>
            <person name="Gwinn M.L."/>
            <person name="Haft D.H."/>
            <person name="Hickey E.K."/>
            <person name="Kolonay J.F."/>
            <person name="Nelson W.C."/>
            <person name="Umayam L.A."/>
            <person name="Ermolaeva M.D."/>
            <person name="Salzberg S.L."/>
            <person name="Delcher A."/>
            <person name="Utterback T.R."/>
            <person name="Weidman J.F."/>
            <person name="Khouri H.M."/>
            <person name="Gill J."/>
            <person name="Mikula A."/>
            <person name="Bishai W."/>
            <person name="Jacobs W.R. Jr."/>
            <person name="Venter J.C."/>
            <person name="Fraser C.M."/>
        </authorList>
    </citation>
    <scope>NUCLEOTIDE SEQUENCE [LARGE SCALE GENOMIC DNA]</scope>
    <source>
        <strain>CDC 1551 / Oshkosh</strain>
    </source>
</reference>
<protein>
    <recommendedName>
        <fullName>Alcohol dehydrogenase B</fullName>
        <ecNumber>1.1.1.1</ecNumber>
    </recommendedName>
</protein>
<sequence length="375" mass="39748">MKTKGALIWEFNQPWSVEEIEIGDPRKDEVKIQMEAAGMCRSDHHLVTGDIPMAGFPVLGGHEGAGIVTEVGPGVDDFAPGDHVVLAFIPSCGKCPSCQAGMRNLCDLGAGLLAGESVTDGSFRIQARGQNVYPMTLLGTFSPYMVVHRSSVVKIDPSVPFEVACLVGCGVTTGYGSAVRTADVRPGDDVAIVGLGGVGMAALQGAVSAGARYVFAVEPVEWKRDQALKFGATHVYPDINAALMGIAEVTYGLMAQKVIITVGKLDGADVDSYLTITAKGGTCVLTAIGSLVDTQVTLNLAMLTLLQKNIQGTIFGGGNPHYDIPKLLSMYKAGKLNLDDMVTTAYKLEQINDGYQDMLNGKNIRGVIRYTDDDR</sequence>
<keyword id="KW-0963">Cytoplasm</keyword>
<keyword id="KW-0479">Metal-binding</keyword>
<keyword id="KW-0520">NAD</keyword>
<keyword id="KW-0560">Oxidoreductase</keyword>
<keyword id="KW-1185">Reference proteome</keyword>
<keyword id="KW-0862">Zinc</keyword>
<accession>P9WQC6</accession>
<accession>L0T7F0</accession>
<accession>P71818</accession>
<evidence type="ECO:0000250" key="1"/>
<evidence type="ECO:0000305" key="2"/>
<gene>
    <name type="primary">adhB</name>
    <name type="ordered locus">MT0786</name>
</gene>
<feature type="chain" id="PRO_0000426799" description="Alcohol dehydrogenase B">
    <location>
        <begin position="1"/>
        <end position="375"/>
    </location>
</feature>
<feature type="binding site" evidence="1">
    <location>
        <position position="40"/>
    </location>
    <ligand>
        <name>Zn(2+)</name>
        <dbReference type="ChEBI" id="CHEBI:29105"/>
        <label>1</label>
        <note>catalytic</note>
    </ligand>
</feature>
<feature type="binding site" evidence="1">
    <location>
        <position position="62"/>
    </location>
    <ligand>
        <name>Zn(2+)</name>
        <dbReference type="ChEBI" id="CHEBI:29105"/>
        <label>1</label>
        <note>catalytic</note>
    </ligand>
</feature>
<feature type="binding site" evidence="1">
    <location>
        <position position="92"/>
    </location>
    <ligand>
        <name>Zn(2+)</name>
        <dbReference type="ChEBI" id="CHEBI:29105"/>
        <label>2</label>
    </ligand>
</feature>
<feature type="binding site" evidence="1">
    <location>
        <position position="95"/>
    </location>
    <ligand>
        <name>Zn(2+)</name>
        <dbReference type="ChEBI" id="CHEBI:29105"/>
        <label>2</label>
    </ligand>
</feature>
<feature type="binding site" evidence="1">
    <location>
        <position position="98"/>
    </location>
    <ligand>
        <name>Zn(2+)</name>
        <dbReference type="ChEBI" id="CHEBI:29105"/>
        <label>2</label>
    </ligand>
</feature>
<feature type="binding site" evidence="1">
    <location>
        <position position="106"/>
    </location>
    <ligand>
        <name>Zn(2+)</name>
        <dbReference type="ChEBI" id="CHEBI:29105"/>
        <label>2</label>
    </ligand>
</feature>
<feature type="binding site" evidence="1">
    <location>
        <position position="169"/>
    </location>
    <ligand>
        <name>Zn(2+)</name>
        <dbReference type="ChEBI" id="CHEBI:29105"/>
        <label>1</label>
        <note>catalytic</note>
    </ligand>
</feature>
<name>ADHB_MYCTO</name>
<dbReference type="EC" id="1.1.1.1"/>
<dbReference type="EMBL" id="AE000516">
    <property type="protein sequence ID" value="AAK45027.1"/>
    <property type="status" value="ALT_INIT"/>
    <property type="molecule type" value="Genomic_DNA"/>
</dbReference>
<dbReference type="PIR" id="D70706">
    <property type="entry name" value="D70706"/>
</dbReference>
<dbReference type="RefSeq" id="WP_003403885.1">
    <property type="nucleotide sequence ID" value="NZ_KK341227.1"/>
</dbReference>
<dbReference type="SMR" id="P9WQC6"/>
<dbReference type="KEGG" id="mtc:MT0786"/>
<dbReference type="PATRIC" id="fig|83331.31.peg.844"/>
<dbReference type="HOGENOM" id="CLU_026673_14_1_11"/>
<dbReference type="Proteomes" id="UP000001020">
    <property type="component" value="Chromosome"/>
</dbReference>
<dbReference type="GO" id="GO:0005829">
    <property type="term" value="C:cytosol"/>
    <property type="evidence" value="ECO:0007669"/>
    <property type="project" value="TreeGrafter"/>
</dbReference>
<dbReference type="GO" id="GO:0004022">
    <property type="term" value="F:alcohol dehydrogenase (NAD+) activity"/>
    <property type="evidence" value="ECO:0007669"/>
    <property type="project" value="UniProtKB-EC"/>
</dbReference>
<dbReference type="GO" id="GO:0051903">
    <property type="term" value="F:S-(hydroxymethyl)glutathione dehydrogenase [NAD(P)+] activity"/>
    <property type="evidence" value="ECO:0007669"/>
    <property type="project" value="TreeGrafter"/>
</dbReference>
<dbReference type="GO" id="GO:0008270">
    <property type="term" value="F:zinc ion binding"/>
    <property type="evidence" value="ECO:0007669"/>
    <property type="project" value="InterPro"/>
</dbReference>
<dbReference type="GO" id="GO:0046294">
    <property type="term" value="P:formaldehyde catabolic process"/>
    <property type="evidence" value="ECO:0007669"/>
    <property type="project" value="TreeGrafter"/>
</dbReference>
<dbReference type="CDD" id="cd08279">
    <property type="entry name" value="Zn_ADH_class_III"/>
    <property type="match status" value="1"/>
</dbReference>
<dbReference type="Gene3D" id="3.90.180.10">
    <property type="entry name" value="Medium-chain alcohol dehydrogenases, catalytic domain"/>
    <property type="match status" value="1"/>
</dbReference>
<dbReference type="Gene3D" id="3.40.50.720">
    <property type="entry name" value="NAD(P)-binding Rossmann-like Domain"/>
    <property type="match status" value="1"/>
</dbReference>
<dbReference type="InterPro" id="IPR013149">
    <property type="entry name" value="ADH-like_C"/>
</dbReference>
<dbReference type="InterPro" id="IPR013154">
    <property type="entry name" value="ADH-like_N"/>
</dbReference>
<dbReference type="InterPro" id="IPR023921">
    <property type="entry name" value="ADH_Zn_actinomycetes"/>
</dbReference>
<dbReference type="InterPro" id="IPR002328">
    <property type="entry name" value="ADH_Zn_CS"/>
</dbReference>
<dbReference type="InterPro" id="IPR011032">
    <property type="entry name" value="GroES-like_sf"/>
</dbReference>
<dbReference type="InterPro" id="IPR036291">
    <property type="entry name" value="NAD(P)-bd_dom_sf"/>
</dbReference>
<dbReference type="InterPro" id="IPR020843">
    <property type="entry name" value="PKS_ER"/>
</dbReference>
<dbReference type="NCBIfam" id="TIGR03989">
    <property type="entry name" value="Rxyl_3153"/>
    <property type="match status" value="1"/>
</dbReference>
<dbReference type="PANTHER" id="PTHR43880">
    <property type="entry name" value="ALCOHOL DEHYDROGENASE"/>
    <property type="match status" value="1"/>
</dbReference>
<dbReference type="PANTHER" id="PTHR43880:SF12">
    <property type="entry name" value="ALCOHOL DEHYDROGENASE CLASS-3"/>
    <property type="match status" value="1"/>
</dbReference>
<dbReference type="Pfam" id="PF08240">
    <property type="entry name" value="ADH_N"/>
    <property type="match status" value="1"/>
</dbReference>
<dbReference type="Pfam" id="PF00107">
    <property type="entry name" value="ADH_zinc_N"/>
    <property type="match status" value="1"/>
</dbReference>
<dbReference type="SMART" id="SM00829">
    <property type="entry name" value="PKS_ER"/>
    <property type="match status" value="1"/>
</dbReference>
<dbReference type="SUPFAM" id="SSF50129">
    <property type="entry name" value="GroES-like"/>
    <property type="match status" value="2"/>
</dbReference>
<dbReference type="SUPFAM" id="SSF51735">
    <property type="entry name" value="NAD(P)-binding Rossmann-fold domains"/>
    <property type="match status" value="1"/>
</dbReference>
<dbReference type="PROSITE" id="PS00059">
    <property type="entry name" value="ADH_ZINC"/>
    <property type="match status" value="1"/>
</dbReference>